<feature type="chain" id="PRO_0000075609" description="2-C-methyl-D-erythritol 4-phosphate cytidylyltransferase">
    <location>
        <begin position="1"/>
        <end position="236"/>
    </location>
</feature>
<feature type="site" description="Transition state stabilizer" evidence="1">
    <location>
        <position position="20"/>
    </location>
</feature>
<feature type="site" description="Transition state stabilizer" evidence="1">
    <location>
        <position position="27"/>
    </location>
</feature>
<feature type="site" description="Positions MEP for the nucleophilic attack" evidence="1">
    <location>
        <position position="157"/>
    </location>
</feature>
<feature type="site" description="Positions MEP for the nucleophilic attack" evidence="1">
    <location>
        <position position="213"/>
    </location>
</feature>
<name>ISPD_SALTI</name>
<reference key="1">
    <citation type="journal article" date="2001" name="Nature">
        <title>Complete genome sequence of a multiple drug resistant Salmonella enterica serovar Typhi CT18.</title>
        <authorList>
            <person name="Parkhill J."/>
            <person name="Dougan G."/>
            <person name="James K.D."/>
            <person name="Thomson N.R."/>
            <person name="Pickard D."/>
            <person name="Wain J."/>
            <person name="Churcher C.M."/>
            <person name="Mungall K.L."/>
            <person name="Bentley S.D."/>
            <person name="Holden M.T.G."/>
            <person name="Sebaihia M."/>
            <person name="Baker S."/>
            <person name="Basham D."/>
            <person name="Brooks K."/>
            <person name="Chillingworth T."/>
            <person name="Connerton P."/>
            <person name="Cronin A."/>
            <person name="Davis P."/>
            <person name="Davies R.M."/>
            <person name="Dowd L."/>
            <person name="White N."/>
            <person name="Farrar J."/>
            <person name="Feltwell T."/>
            <person name="Hamlin N."/>
            <person name="Haque A."/>
            <person name="Hien T.T."/>
            <person name="Holroyd S."/>
            <person name="Jagels K."/>
            <person name="Krogh A."/>
            <person name="Larsen T.S."/>
            <person name="Leather S."/>
            <person name="Moule S."/>
            <person name="O'Gaora P."/>
            <person name="Parry C."/>
            <person name="Quail M.A."/>
            <person name="Rutherford K.M."/>
            <person name="Simmonds M."/>
            <person name="Skelton J."/>
            <person name="Stevens K."/>
            <person name="Whitehead S."/>
            <person name="Barrell B.G."/>
        </authorList>
    </citation>
    <scope>NUCLEOTIDE SEQUENCE [LARGE SCALE GENOMIC DNA]</scope>
    <source>
        <strain>CT18</strain>
    </source>
</reference>
<reference key="2">
    <citation type="journal article" date="2003" name="J. Bacteriol.">
        <title>Comparative genomics of Salmonella enterica serovar Typhi strains Ty2 and CT18.</title>
        <authorList>
            <person name="Deng W."/>
            <person name="Liou S.-R."/>
            <person name="Plunkett G. III"/>
            <person name="Mayhew G.F."/>
            <person name="Rose D.J."/>
            <person name="Burland V."/>
            <person name="Kodoyianni V."/>
            <person name="Schwartz D.C."/>
            <person name="Blattner F.R."/>
        </authorList>
    </citation>
    <scope>NUCLEOTIDE SEQUENCE [LARGE SCALE GENOMIC DNA]</scope>
    <source>
        <strain>ATCC 700931 / Ty2</strain>
    </source>
</reference>
<accession>Q8Z471</accession>
<comment type="function">
    <text evidence="1">Catalyzes the formation of 4-diphosphocytidyl-2-C-methyl-D-erythritol from CTP and 2-C-methyl-D-erythritol 4-phosphate (MEP).</text>
</comment>
<comment type="catalytic activity">
    <reaction evidence="1">
        <text>2-C-methyl-D-erythritol 4-phosphate + CTP + H(+) = 4-CDP-2-C-methyl-D-erythritol + diphosphate</text>
        <dbReference type="Rhea" id="RHEA:13429"/>
        <dbReference type="ChEBI" id="CHEBI:15378"/>
        <dbReference type="ChEBI" id="CHEBI:33019"/>
        <dbReference type="ChEBI" id="CHEBI:37563"/>
        <dbReference type="ChEBI" id="CHEBI:57823"/>
        <dbReference type="ChEBI" id="CHEBI:58262"/>
        <dbReference type="EC" id="2.7.7.60"/>
    </reaction>
</comment>
<comment type="pathway">
    <text evidence="1">Isoprenoid biosynthesis; isopentenyl diphosphate biosynthesis via DXP pathway; isopentenyl diphosphate from 1-deoxy-D-xylulose 5-phosphate: step 2/6.</text>
</comment>
<comment type="subunit">
    <text evidence="1">Homodimer.</text>
</comment>
<comment type="similarity">
    <text evidence="1">Belongs to the IspD/TarI cytidylyltransferase family. IspD subfamily.</text>
</comment>
<dbReference type="EC" id="2.7.7.60" evidence="1"/>
<dbReference type="EMBL" id="AL513382">
    <property type="protein sequence ID" value="CAD06036.1"/>
    <property type="molecule type" value="Genomic_DNA"/>
</dbReference>
<dbReference type="EMBL" id="AE014613">
    <property type="protein sequence ID" value="AAO70388.1"/>
    <property type="molecule type" value="Genomic_DNA"/>
</dbReference>
<dbReference type="RefSeq" id="NP_457319.1">
    <property type="nucleotide sequence ID" value="NC_003198.1"/>
</dbReference>
<dbReference type="RefSeq" id="WP_000741649.1">
    <property type="nucleotide sequence ID" value="NZ_WSUR01000005.1"/>
</dbReference>
<dbReference type="SMR" id="Q8Z471"/>
<dbReference type="STRING" id="220341.gene:17586946"/>
<dbReference type="KEGG" id="stt:t2831"/>
<dbReference type="KEGG" id="sty:STY3055"/>
<dbReference type="PATRIC" id="fig|220341.7.peg.3108"/>
<dbReference type="eggNOG" id="COG1211">
    <property type="taxonomic scope" value="Bacteria"/>
</dbReference>
<dbReference type="HOGENOM" id="CLU_061281_3_1_6"/>
<dbReference type="OMA" id="TPMLIHA"/>
<dbReference type="OrthoDB" id="9806837at2"/>
<dbReference type="UniPathway" id="UPA00056">
    <property type="reaction ID" value="UER00093"/>
</dbReference>
<dbReference type="Proteomes" id="UP000000541">
    <property type="component" value="Chromosome"/>
</dbReference>
<dbReference type="Proteomes" id="UP000002670">
    <property type="component" value="Chromosome"/>
</dbReference>
<dbReference type="GO" id="GO:0050518">
    <property type="term" value="F:2-C-methyl-D-erythritol 4-phosphate cytidylyltransferase activity"/>
    <property type="evidence" value="ECO:0007669"/>
    <property type="project" value="UniProtKB-UniRule"/>
</dbReference>
<dbReference type="GO" id="GO:0019288">
    <property type="term" value="P:isopentenyl diphosphate biosynthetic process, methylerythritol 4-phosphate pathway"/>
    <property type="evidence" value="ECO:0007669"/>
    <property type="project" value="UniProtKB-UniRule"/>
</dbReference>
<dbReference type="CDD" id="cd02516">
    <property type="entry name" value="CDP-ME_synthetase"/>
    <property type="match status" value="1"/>
</dbReference>
<dbReference type="FunFam" id="3.90.550.10:FF:000003">
    <property type="entry name" value="2-C-methyl-D-erythritol 4-phosphate cytidylyltransferase"/>
    <property type="match status" value="1"/>
</dbReference>
<dbReference type="Gene3D" id="3.90.550.10">
    <property type="entry name" value="Spore Coat Polysaccharide Biosynthesis Protein SpsA, Chain A"/>
    <property type="match status" value="1"/>
</dbReference>
<dbReference type="HAMAP" id="MF_00108">
    <property type="entry name" value="IspD"/>
    <property type="match status" value="1"/>
</dbReference>
<dbReference type="InterPro" id="IPR001228">
    <property type="entry name" value="IspD"/>
</dbReference>
<dbReference type="InterPro" id="IPR034683">
    <property type="entry name" value="IspD/TarI"/>
</dbReference>
<dbReference type="InterPro" id="IPR050088">
    <property type="entry name" value="IspD/TarI_cytidylyltransf_bact"/>
</dbReference>
<dbReference type="InterPro" id="IPR018294">
    <property type="entry name" value="ISPD_synthase_CS"/>
</dbReference>
<dbReference type="InterPro" id="IPR029044">
    <property type="entry name" value="Nucleotide-diphossugar_trans"/>
</dbReference>
<dbReference type="NCBIfam" id="TIGR00453">
    <property type="entry name" value="ispD"/>
    <property type="match status" value="1"/>
</dbReference>
<dbReference type="PANTHER" id="PTHR32125">
    <property type="entry name" value="2-C-METHYL-D-ERYTHRITOL 4-PHOSPHATE CYTIDYLYLTRANSFERASE, CHLOROPLASTIC"/>
    <property type="match status" value="1"/>
</dbReference>
<dbReference type="PANTHER" id="PTHR32125:SF4">
    <property type="entry name" value="2-C-METHYL-D-ERYTHRITOL 4-PHOSPHATE CYTIDYLYLTRANSFERASE, CHLOROPLASTIC"/>
    <property type="match status" value="1"/>
</dbReference>
<dbReference type="Pfam" id="PF01128">
    <property type="entry name" value="IspD"/>
    <property type="match status" value="1"/>
</dbReference>
<dbReference type="SUPFAM" id="SSF53448">
    <property type="entry name" value="Nucleotide-diphospho-sugar transferases"/>
    <property type="match status" value="1"/>
</dbReference>
<dbReference type="PROSITE" id="PS01295">
    <property type="entry name" value="ISPD"/>
    <property type="match status" value="1"/>
</dbReference>
<gene>
    <name evidence="1" type="primary">ispD</name>
    <name type="ordered locus">STY3055</name>
    <name type="ordered locus">t2831</name>
</gene>
<proteinExistence type="inferred from homology"/>
<sequence length="236" mass="25729">MAATLLDVCAVVPAAGFGRRMQTECPKQYLSIGNKTILEHSVHALLAHPRVTRVVIAISPGDHRFAQLPLANHPQITVVDGGNERADSVLAGLQAVAKAQWVLVHDAARPCLHQDDLARLLAISENSRVGGILASPVRDTMKRGEPGKNAIAHTVERADLWHALTPQFFPRELLHDCLTRALNEGATITDEASALEYCGFHPALVEGRADNIKVTRPEDLALAEFYLTRTIHQEKA</sequence>
<protein>
    <recommendedName>
        <fullName evidence="1">2-C-methyl-D-erythritol 4-phosphate cytidylyltransferase</fullName>
        <ecNumber evidence="1">2.7.7.60</ecNumber>
    </recommendedName>
    <alternativeName>
        <fullName evidence="1">4-diphosphocytidyl-2C-methyl-D-erythritol synthase</fullName>
    </alternativeName>
    <alternativeName>
        <fullName evidence="1">MEP cytidylyltransferase</fullName>
        <shortName evidence="1">MCT</shortName>
    </alternativeName>
</protein>
<organism>
    <name type="scientific">Salmonella typhi</name>
    <dbReference type="NCBI Taxonomy" id="90370"/>
    <lineage>
        <taxon>Bacteria</taxon>
        <taxon>Pseudomonadati</taxon>
        <taxon>Pseudomonadota</taxon>
        <taxon>Gammaproteobacteria</taxon>
        <taxon>Enterobacterales</taxon>
        <taxon>Enterobacteriaceae</taxon>
        <taxon>Salmonella</taxon>
    </lineage>
</organism>
<keyword id="KW-0414">Isoprene biosynthesis</keyword>
<keyword id="KW-0548">Nucleotidyltransferase</keyword>
<keyword id="KW-0808">Transferase</keyword>
<evidence type="ECO:0000255" key="1">
    <source>
        <dbReference type="HAMAP-Rule" id="MF_00108"/>
    </source>
</evidence>